<reference key="1">
    <citation type="journal article" date="2002" name="Proc. Natl. Acad. Sci. U.S.A.">
        <title>Extensive mosaic structure revealed by the complete genome sequence of uropathogenic Escherichia coli.</title>
        <authorList>
            <person name="Welch R.A."/>
            <person name="Burland V."/>
            <person name="Plunkett G. III"/>
            <person name="Redford P."/>
            <person name="Roesch P."/>
            <person name="Rasko D."/>
            <person name="Buckles E.L."/>
            <person name="Liou S.-R."/>
            <person name="Boutin A."/>
            <person name="Hackett J."/>
            <person name="Stroud D."/>
            <person name="Mayhew G.F."/>
            <person name="Rose D.J."/>
            <person name="Zhou S."/>
            <person name="Schwartz D.C."/>
            <person name="Perna N.T."/>
            <person name="Mobley H.L.T."/>
            <person name="Donnenberg M.S."/>
            <person name="Blattner F.R."/>
        </authorList>
    </citation>
    <scope>NUCLEOTIDE SEQUENCE [LARGE SCALE GENOMIC DNA]</scope>
    <source>
        <strain>CFT073 / ATCC 700928 / UPEC</strain>
    </source>
</reference>
<accession>P62770</accession>
<accession>P37048</accession>
<evidence type="ECO:0000255" key="1">
    <source>
        <dbReference type="HAMAP-Rule" id="MF_01519"/>
    </source>
</evidence>
<keyword id="KW-1185">Reference proteome</keyword>
<comment type="similarity">
    <text evidence="1">Belongs to the UPF0325 family.</text>
</comment>
<feature type="chain" id="PRO_0000211836" description="UPF0325 protein YaeH">
    <location>
        <begin position="1"/>
        <end position="128"/>
    </location>
</feature>
<name>YAEH_ECOL6</name>
<organism>
    <name type="scientific">Escherichia coli O6:H1 (strain CFT073 / ATCC 700928 / UPEC)</name>
    <dbReference type="NCBI Taxonomy" id="199310"/>
    <lineage>
        <taxon>Bacteria</taxon>
        <taxon>Pseudomonadati</taxon>
        <taxon>Pseudomonadota</taxon>
        <taxon>Gammaproteobacteria</taxon>
        <taxon>Enterobacterales</taxon>
        <taxon>Enterobacteriaceae</taxon>
        <taxon>Escherichia</taxon>
    </lineage>
</organism>
<proteinExistence type="inferred from homology"/>
<dbReference type="EMBL" id="AE014075">
    <property type="protein sequence ID" value="AAN78694.1"/>
    <property type="molecule type" value="Genomic_DNA"/>
</dbReference>
<dbReference type="RefSeq" id="WP_000272188.1">
    <property type="nucleotide sequence ID" value="NZ_CP051263.1"/>
</dbReference>
<dbReference type="SMR" id="P62770"/>
<dbReference type="STRING" id="199310.c0200"/>
<dbReference type="KEGG" id="ecc:c0200"/>
<dbReference type="eggNOG" id="ENOG502ZBV4">
    <property type="taxonomic scope" value="Bacteria"/>
</dbReference>
<dbReference type="HOGENOM" id="CLU_136774_0_0_6"/>
<dbReference type="BioCyc" id="ECOL199310:C0200-MONOMER"/>
<dbReference type="Proteomes" id="UP000001410">
    <property type="component" value="Chromosome"/>
</dbReference>
<dbReference type="HAMAP" id="MF_01519">
    <property type="entry name" value="UPF0325"/>
    <property type="match status" value="1"/>
</dbReference>
<dbReference type="InterPro" id="IPR020911">
    <property type="entry name" value="UPF0325"/>
</dbReference>
<dbReference type="NCBIfam" id="NF010213">
    <property type="entry name" value="PRK13677.1"/>
    <property type="match status" value="1"/>
</dbReference>
<dbReference type="Pfam" id="PF11944">
    <property type="entry name" value="DUF3461"/>
    <property type="match status" value="1"/>
</dbReference>
<sequence length="128" mass="15096">MYDNLKSLGITNPEEIDRYSLRQEANNDILKIYFQKDKGEFFAKSVKFKYPRQRKTVVADGVGQGYKEVQEISPNLRYIIDELDQICQRDRSEVDLKRKILDDLRHLESVVTNKISEIEADLEKLTRK</sequence>
<protein>
    <recommendedName>
        <fullName evidence="1">UPF0325 protein YaeH</fullName>
    </recommendedName>
</protein>
<gene>
    <name evidence="1" type="primary">yaeH</name>
    <name type="ordered locus">c0200</name>
</gene>